<accession>B6IU98</accession>
<protein>
    <recommendedName>
        <fullName evidence="1">Chaperonin GroEL</fullName>
        <ecNumber evidence="1">5.6.1.7</ecNumber>
    </recommendedName>
    <alternativeName>
        <fullName evidence="1">60 kDa chaperonin</fullName>
    </alternativeName>
    <alternativeName>
        <fullName evidence="1">Chaperonin-60</fullName>
        <shortName evidence="1">Cpn60</shortName>
    </alternativeName>
</protein>
<gene>
    <name evidence="1" type="primary">groEL</name>
    <name evidence="1" type="synonym">groL</name>
    <name type="ordered locus">RC1_2595</name>
</gene>
<proteinExistence type="inferred from homology"/>
<organism>
    <name type="scientific">Rhodospirillum centenum (strain ATCC 51521 / SW)</name>
    <dbReference type="NCBI Taxonomy" id="414684"/>
    <lineage>
        <taxon>Bacteria</taxon>
        <taxon>Pseudomonadati</taxon>
        <taxon>Pseudomonadota</taxon>
        <taxon>Alphaproteobacteria</taxon>
        <taxon>Rhodospirillales</taxon>
        <taxon>Rhodospirillaceae</taxon>
        <taxon>Rhodospirillum</taxon>
    </lineage>
</organism>
<reference key="1">
    <citation type="submission" date="2007-03" db="EMBL/GenBank/DDBJ databases">
        <title>Genome sequence of Rhodospirillum centenum.</title>
        <authorList>
            <person name="Touchman J.W."/>
            <person name="Bauer C."/>
            <person name="Blankenship R.E."/>
        </authorList>
    </citation>
    <scope>NUCLEOTIDE SEQUENCE [LARGE SCALE GENOMIC DNA]</scope>
    <source>
        <strain>ATCC 51521 / SW</strain>
    </source>
</reference>
<comment type="function">
    <text evidence="1">Together with its co-chaperonin GroES, plays an essential role in assisting protein folding. The GroEL-GroES system forms a nano-cage that allows encapsulation of the non-native substrate proteins and provides a physical environment optimized to promote and accelerate protein folding.</text>
</comment>
<comment type="catalytic activity">
    <reaction evidence="1">
        <text>ATP + H2O + a folded polypeptide = ADP + phosphate + an unfolded polypeptide.</text>
        <dbReference type="EC" id="5.6.1.7"/>
    </reaction>
</comment>
<comment type="subunit">
    <text evidence="1">Forms a cylinder of 14 subunits composed of two heptameric rings stacked back-to-back. Interacts with the co-chaperonin GroES.</text>
</comment>
<comment type="subcellular location">
    <subcellularLocation>
        <location evidence="1">Cytoplasm</location>
    </subcellularLocation>
</comment>
<comment type="similarity">
    <text evidence="1">Belongs to the chaperonin (HSP60) family.</text>
</comment>
<feature type="chain" id="PRO_1000130050" description="Chaperonin GroEL">
    <location>
        <begin position="1"/>
        <end position="546"/>
    </location>
</feature>
<feature type="region of interest" description="Disordered" evidence="2">
    <location>
        <begin position="527"/>
        <end position="546"/>
    </location>
</feature>
<feature type="compositionally biased region" description="Gly residues" evidence="2">
    <location>
        <begin position="534"/>
        <end position="546"/>
    </location>
</feature>
<feature type="binding site" evidence="1">
    <location>
        <begin position="30"/>
        <end position="33"/>
    </location>
    <ligand>
        <name>ATP</name>
        <dbReference type="ChEBI" id="CHEBI:30616"/>
    </ligand>
</feature>
<feature type="binding site" evidence="1">
    <location>
        <position position="51"/>
    </location>
    <ligand>
        <name>ATP</name>
        <dbReference type="ChEBI" id="CHEBI:30616"/>
    </ligand>
</feature>
<feature type="binding site" evidence="1">
    <location>
        <begin position="87"/>
        <end position="91"/>
    </location>
    <ligand>
        <name>ATP</name>
        <dbReference type="ChEBI" id="CHEBI:30616"/>
    </ligand>
</feature>
<feature type="binding site" evidence="1">
    <location>
        <position position="415"/>
    </location>
    <ligand>
        <name>ATP</name>
        <dbReference type="ChEBI" id="CHEBI:30616"/>
    </ligand>
</feature>
<feature type="binding site" evidence="1">
    <location>
        <position position="496"/>
    </location>
    <ligand>
        <name>ATP</name>
        <dbReference type="ChEBI" id="CHEBI:30616"/>
    </ligand>
</feature>
<evidence type="ECO:0000255" key="1">
    <source>
        <dbReference type="HAMAP-Rule" id="MF_00600"/>
    </source>
</evidence>
<evidence type="ECO:0000256" key="2">
    <source>
        <dbReference type="SAM" id="MobiDB-lite"/>
    </source>
</evidence>
<keyword id="KW-0067">ATP-binding</keyword>
<keyword id="KW-0143">Chaperone</keyword>
<keyword id="KW-0963">Cytoplasm</keyword>
<keyword id="KW-0413">Isomerase</keyword>
<keyword id="KW-0547">Nucleotide-binding</keyword>
<keyword id="KW-1185">Reference proteome</keyword>
<dbReference type="EC" id="5.6.1.7" evidence="1"/>
<dbReference type="EMBL" id="CP000613">
    <property type="protein sequence ID" value="ACI99975.1"/>
    <property type="molecule type" value="Genomic_DNA"/>
</dbReference>
<dbReference type="RefSeq" id="WP_012567757.1">
    <property type="nucleotide sequence ID" value="NC_011420.2"/>
</dbReference>
<dbReference type="SMR" id="B6IU98"/>
<dbReference type="STRING" id="414684.RC1_2595"/>
<dbReference type="KEGG" id="rce:RC1_2595"/>
<dbReference type="eggNOG" id="COG0459">
    <property type="taxonomic scope" value="Bacteria"/>
</dbReference>
<dbReference type="HOGENOM" id="CLU_016503_3_0_5"/>
<dbReference type="OrthoDB" id="9766614at2"/>
<dbReference type="Proteomes" id="UP000001591">
    <property type="component" value="Chromosome"/>
</dbReference>
<dbReference type="GO" id="GO:0005737">
    <property type="term" value="C:cytoplasm"/>
    <property type="evidence" value="ECO:0007669"/>
    <property type="project" value="UniProtKB-SubCell"/>
</dbReference>
<dbReference type="GO" id="GO:0005524">
    <property type="term" value="F:ATP binding"/>
    <property type="evidence" value="ECO:0007669"/>
    <property type="project" value="UniProtKB-UniRule"/>
</dbReference>
<dbReference type="GO" id="GO:0140662">
    <property type="term" value="F:ATP-dependent protein folding chaperone"/>
    <property type="evidence" value="ECO:0007669"/>
    <property type="project" value="InterPro"/>
</dbReference>
<dbReference type="GO" id="GO:0016853">
    <property type="term" value="F:isomerase activity"/>
    <property type="evidence" value="ECO:0007669"/>
    <property type="project" value="UniProtKB-KW"/>
</dbReference>
<dbReference type="GO" id="GO:0051082">
    <property type="term" value="F:unfolded protein binding"/>
    <property type="evidence" value="ECO:0007669"/>
    <property type="project" value="UniProtKB-UniRule"/>
</dbReference>
<dbReference type="GO" id="GO:0042026">
    <property type="term" value="P:protein refolding"/>
    <property type="evidence" value="ECO:0007669"/>
    <property type="project" value="UniProtKB-UniRule"/>
</dbReference>
<dbReference type="CDD" id="cd03344">
    <property type="entry name" value="GroEL"/>
    <property type="match status" value="1"/>
</dbReference>
<dbReference type="FunFam" id="1.10.560.10:FF:000001">
    <property type="entry name" value="60 kDa chaperonin"/>
    <property type="match status" value="1"/>
</dbReference>
<dbReference type="FunFam" id="3.50.7.10:FF:000001">
    <property type="entry name" value="60 kDa chaperonin"/>
    <property type="match status" value="1"/>
</dbReference>
<dbReference type="Gene3D" id="3.50.7.10">
    <property type="entry name" value="GroEL"/>
    <property type="match status" value="1"/>
</dbReference>
<dbReference type="Gene3D" id="1.10.560.10">
    <property type="entry name" value="GroEL-like equatorial domain"/>
    <property type="match status" value="1"/>
</dbReference>
<dbReference type="Gene3D" id="3.30.260.10">
    <property type="entry name" value="TCP-1-like chaperonin intermediate domain"/>
    <property type="match status" value="1"/>
</dbReference>
<dbReference type="HAMAP" id="MF_00600">
    <property type="entry name" value="CH60"/>
    <property type="match status" value="1"/>
</dbReference>
<dbReference type="InterPro" id="IPR018370">
    <property type="entry name" value="Chaperonin_Cpn60_CS"/>
</dbReference>
<dbReference type="InterPro" id="IPR001844">
    <property type="entry name" value="Cpn60/GroEL"/>
</dbReference>
<dbReference type="InterPro" id="IPR002423">
    <property type="entry name" value="Cpn60/GroEL/TCP-1"/>
</dbReference>
<dbReference type="InterPro" id="IPR027409">
    <property type="entry name" value="GroEL-like_apical_dom_sf"/>
</dbReference>
<dbReference type="InterPro" id="IPR027413">
    <property type="entry name" value="GROEL-like_equatorial_sf"/>
</dbReference>
<dbReference type="InterPro" id="IPR027410">
    <property type="entry name" value="TCP-1-like_intermed_sf"/>
</dbReference>
<dbReference type="NCBIfam" id="TIGR02348">
    <property type="entry name" value="GroEL"/>
    <property type="match status" value="1"/>
</dbReference>
<dbReference type="NCBIfam" id="NF000592">
    <property type="entry name" value="PRK00013.1"/>
    <property type="match status" value="1"/>
</dbReference>
<dbReference type="NCBIfam" id="NF009487">
    <property type="entry name" value="PRK12849.1"/>
    <property type="match status" value="1"/>
</dbReference>
<dbReference type="NCBIfam" id="NF009488">
    <property type="entry name" value="PRK12850.1"/>
    <property type="match status" value="1"/>
</dbReference>
<dbReference type="NCBIfam" id="NF009489">
    <property type="entry name" value="PRK12851.1"/>
    <property type="match status" value="1"/>
</dbReference>
<dbReference type="PANTHER" id="PTHR45633">
    <property type="entry name" value="60 KDA HEAT SHOCK PROTEIN, MITOCHONDRIAL"/>
    <property type="match status" value="1"/>
</dbReference>
<dbReference type="Pfam" id="PF00118">
    <property type="entry name" value="Cpn60_TCP1"/>
    <property type="match status" value="1"/>
</dbReference>
<dbReference type="PRINTS" id="PR00298">
    <property type="entry name" value="CHAPERONIN60"/>
</dbReference>
<dbReference type="SUPFAM" id="SSF52029">
    <property type="entry name" value="GroEL apical domain-like"/>
    <property type="match status" value="1"/>
</dbReference>
<dbReference type="SUPFAM" id="SSF48592">
    <property type="entry name" value="GroEL equatorial domain-like"/>
    <property type="match status" value="1"/>
</dbReference>
<dbReference type="SUPFAM" id="SSF54849">
    <property type="entry name" value="GroEL-intermediate domain like"/>
    <property type="match status" value="1"/>
</dbReference>
<dbReference type="PROSITE" id="PS00296">
    <property type="entry name" value="CHAPERONINS_CPN60"/>
    <property type="match status" value="1"/>
</dbReference>
<sequence>MAAKEVKFGSDARAKMLRGVDILADAVKVTLGPKGRNVVIEKSFGAPRITKDGVTVAKEIELSDKFENMGAQMVKEVAQKTADLAGDGTTTATVLAQAIVREGAKAIAAGMNPMDVKRGVDVAVQTVVDDIKSRSRKVTTNDEIAQVGTISANGEAEIGKMIAEAMQKVGNEGVITVEEAKALETELDVVEGMQFDRGYLSPYFVTNADKMVAELESPYILLFEKKLSGLQAMLPVLEAVVQSSRPLLIVAEDVEGEALATLVVNKLRGGLKVAAVKAPGFGDRRKAMLEDMAILTGGQVVSEDLGIKLENVSLEMLGQAKKVVITKDNTTIVDGAGSKEDIQARIVQIKAQIEETTSDYDREKLQERLAKLAGGVAVIRVGGATEVEVKERKDRVDDAMHATRAAVEEGIVAGGGVALLYATKALDKLTAVNEDQKFGIDIVRKALQAPVRQIAQNAGFDGSVIVGKLLEKGETNFGFNAQAGEYGDMFKFGVIDPTKVVRAALQDAASVAGLLITTEAMIGEKPEKKAPAGAPGGMGGMGDMDF</sequence>
<name>CH60_RHOCS</name>